<dbReference type="EMBL" id="V01154">
    <property type="protein sequence ID" value="CAA24471.1"/>
    <property type="molecule type" value="Genomic_DNA"/>
</dbReference>
<dbReference type="EMBL" id="V01155">
    <property type="protein sequence ID" value="CAA24486.1"/>
    <property type="molecule type" value="Genomic_DNA"/>
</dbReference>
<dbReference type="EMBL" id="EU771092">
    <property type="protein sequence ID" value="ACE96028.1"/>
    <property type="molecule type" value="Genomic_DNA"/>
</dbReference>
<dbReference type="EMBL" id="X04386">
    <property type="protein sequence ID" value="CAA27973.1"/>
    <property type="molecule type" value="Genomic_DNA"/>
</dbReference>
<dbReference type="PIR" id="B92343">
    <property type="entry name" value="ERBP69"/>
</dbReference>
<dbReference type="RefSeq" id="YP_002004534.1">
    <property type="nucleotide sequence ID" value="NC_011048.1"/>
</dbReference>
<dbReference type="PDB" id="8PW2">
    <property type="method" value="X-ray"/>
    <property type="resolution" value="1.59 A"/>
    <property type="chains" value="A=2-73"/>
</dbReference>
<dbReference type="PDB" id="8PW4">
    <property type="method" value="X-ray"/>
    <property type="resolution" value="2.30 A"/>
    <property type="chains" value="A/B=2-84"/>
</dbReference>
<dbReference type="PDBsum" id="8PW2"/>
<dbReference type="PDBsum" id="8PW4"/>
<dbReference type="SMR" id="P03685"/>
<dbReference type="GeneID" id="6446509"/>
<dbReference type="KEGG" id="vg:6446509"/>
<dbReference type="Proteomes" id="UP000001207">
    <property type="component" value="Genome"/>
</dbReference>
<dbReference type="GO" id="GO:0017053">
    <property type="term" value="C:transcription repressor complex"/>
    <property type="evidence" value="ECO:0000314"/>
    <property type="project" value="CACAO"/>
</dbReference>
<dbReference type="GO" id="GO:0003677">
    <property type="term" value="F:DNA binding"/>
    <property type="evidence" value="ECO:0000314"/>
    <property type="project" value="UniProtKB"/>
</dbReference>
<dbReference type="GO" id="GO:0001217">
    <property type="term" value="F:DNA-binding transcription repressor activity"/>
    <property type="evidence" value="ECO:0000315"/>
    <property type="project" value="CACAO"/>
</dbReference>
<dbReference type="GO" id="GO:0030261">
    <property type="term" value="P:chromosome condensation"/>
    <property type="evidence" value="ECO:0007669"/>
    <property type="project" value="UniProtKB-KW"/>
</dbReference>
<dbReference type="GO" id="GO:0006260">
    <property type="term" value="P:DNA replication"/>
    <property type="evidence" value="ECO:0007669"/>
    <property type="project" value="UniProtKB-KW"/>
</dbReference>
<dbReference type="GO" id="GO:0006351">
    <property type="term" value="P:DNA-templated transcription"/>
    <property type="evidence" value="ECO:0000315"/>
    <property type="project" value="CACAO"/>
</dbReference>
<dbReference type="GO" id="GO:0046782">
    <property type="term" value="P:regulation of viral transcription"/>
    <property type="evidence" value="ECO:0000314"/>
    <property type="project" value="UniProtKB"/>
</dbReference>
<dbReference type="GO" id="GO:0039693">
    <property type="term" value="P:viral DNA genome replication"/>
    <property type="evidence" value="ECO:0000314"/>
    <property type="project" value="UniProtKB"/>
</dbReference>
<dbReference type="InterPro" id="IPR035188">
    <property type="entry name" value="Histone-like_p6"/>
</dbReference>
<dbReference type="Pfam" id="PF17548">
    <property type="entry name" value="p6"/>
    <property type="match status" value="1"/>
</dbReference>
<reference key="1">
    <citation type="journal article" date="1982" name="J. Biol. Chem.">
        <title>Nucleotide sequences of transcription and translation initiation regions in Bacillus phage phi 29 early genes.</title>
        <authorList>
            <person name="Murray C.L."/>
            <person name="Rabinowitz J.C."/>
        </authorList>
    </citation>
    <scope>NUCLEOTIDE SEQUENCE [GENOMIC DNA]</scope>
    <scope>INDUCTION</scope>
    <scope>IDENTIFICATION</scope>
</reference>
<reference key="2">
    <citation type="journal article" date="1982" name="Gene">
        <title>Nucleotide sequence of the major early region of bacteriophage phi 29.</title>
        <authorList>
            <person name="Yoshikawa H."/>
            <person name="Ito J."/>
        </authorList>
    </citation>
    <scope>NUCLEOTIDE SEQUENCE [GENOMIC DNA]</scope>
</reference>
<reference key="3">
    <citation type="submission" date="2008-05" db="EMBL/GenBank/DDBJ databases">
        <authorList>
            <person name="Villegas A.P."/>
            <person name="Lingohr E.J."/>
            <person name="Ceyssens P.-J."/>
            <person name="Kropinski A.M."/>
        </authorList>
    </citation>
    <scope>NUCLEOTIDE SEQUENCE [GENOMIC DNA]</scope>
</reference>
<reference key="4">
    <citation type="journal article" date="1986" name="Nucleic Acids Res.">
        <title>Nucleotide sequence of phage phi 29 gene 7: structure of intergenic spacer between the major early and late genes.</title>
        <authorList>
            <person name="Innis C.A."/>
            <person name="Garvey K.J."/>
            <person name="Ito J."/>
        </authorList>
    </citation>
    <scope>NUCLEOTIDE SEQUENCE [GENOMIC DNA] OF 1-15</scope>
</reference>
<reference key="5">
    <citation type="journal article" date="1990" name="Science">
        <title>A novel nucleoprotein complex at a replication origin.</title>
        <authorList>
            <person name="Serrano M."/>
            <person name="Salas M."/>
            <person name="Hermoso J.M."/>
        </authorList>
    </citation>
    <scope>FUNCTION</scope>
    <scope>DNA-BINDING</scope>
</reference>
<reference key="6">
    <citation type="journal article" date="1994" name="Mol. Gen. Genet.">
        <title>A genetic approach to the identification of functional amino acids in protein p6 of Bacillus subtilis phage phi 29.</title>
        <authorList>
            <person name="Bravo A."/>
            <person name="Hermoso J.M."/>
            <person name="Salas M."/>
        </authorList>
    </citation>
    <scope>MUTAGENESIS</scope>
</reference>
<reference key="7">
    <citation type="journal article" date="1994" name="EMBO J.">
        <title>A new protein domain for binding to DNA through the minor groove.</title>
        <authorList>
            <person name="Freire R."/>
            <person name="Salas M."/>
            <person name="Hermoso J.M."/>
        </authorList>
    </citation>
    <scope>DOMAIN</scope>
    <scope>MUTAGENESIS OF LYS-3; GLN-6; ARG-7; THR-10; LYS-11; ASN-15 AND LYS-18</scope>
    <scope>DNA-BINDING</scope>
</reference>
<reference key="8">
    <citation type="journal article" date="2001" name="J. Biol. Chem.">
        <title>Repression of bacteriophage phi 29 early promoter C2 by viral protein p6 is due to impairment of closed complex.</title>
        <authorList>
            <person name="Camacho A."/>
            <person name="Salas M."/>
        </authorList>
    </citation>
    <scope>FUNCTION</scope>
</reference>
<reference key="9">
    <citation type="journal article" date="2002" name="Gene">
        <title>The in vivo function of phage phi29 nucleoid-associated protein p6 requires formation of dimers.</title>
        <authorList>
            <person name="Abril A."/>
            <person name="Salas M."/>
            <person name="Hermoso J.M."/>
        </authorList>
    </citation>
    <scope>SUBUNIT</scope>
    <scope>MUTAGENESIS OF ILE-9 AND ALA-45</scope>
    <scope>DNA-BINDING</scope>
</reference>
<reference key="10">
    <citation type="journal article" date="2003" name="J. Biol. Chem.">
        <title>Bacteriophage phi 29 early protein p17. Self-association and hetero-association with the viral histone-like protein p6.</title>
        <authorList>
            <person name="Crucitti P."/>
            <person name="Abril A.M."/>
            <person name="Salas M."/>
        </authorList>
    </citation>
    <scope>INTERACTION WITH DNA REPLICATION PROTEIN 17</scope>
</reference>
<reference key="11">
    <citation type="journal article" date="2004" name="Nucleic Acids Res.">
        <title>Binding of phage Phi29 architectural protein p6 to the viral genome: evidence for topological restriction of the phage linear DNA.</title>
        <authorList>
            <person name="Gonzalez-Huici V."/>
            <person name="Alcorlo M."/>
            <person name="Salas M."/>
            <person name="Hermoso J.M."/>
        </authorList>
    </citation>
    <scope>FUNCTION</scope>
    <scope>DNA-BINDING</scope>
</reference>
<reference key="12">
    <citation type="journal article" date="2004" name="Nucleic Acids Res.">
        <title>Genome wide, supercoiling-dependent in vivo binding of a viral protein involved in DNA replication and transcriptional control.</title>
        <authorList>
            <person name="Gonzalez-Huici V."/>
            <person name="Salas M."/>
            <person name="Hermoso J.M."/>
        </authorList>
    </citation>
    <scope>FUNCTION</scope>
    <scope>SUBUNIT</scope>
</reference>
<reference key="13">
    <citation type="journal article" date="2004" name="J. Mol. Recognit.">
        <title>Bacteriophage phi29 protein p6: an architectural protein involved in genome organization, replication and control of transcription.</title>
        <authorList>
            <person name="Gonzalez-Huici V."/>
            <person name="Alcorlo M."/>
            <person name="Salas M."/>
            <person name="Hermoso J.M."/>
        </authorList>
    </citation>
    <scope>REVIEW</scope>
</reference>
<reference key="14">
    <citation type="journal article" date="2002" name="EMBO J.">
        <title>The phi29 transcriptional regulator contacts the nucleoid protein p6 to organize a repression complex.</title>
        <authorList>
            <person name="Calles B."/>
            <person name="Salas M."/>
            <person name="Rojo F."/>
        </authorList>
    </citation>
    <scope>FUNCTION</scope>
    <scope>INTERACTION WITH THE LATE GENES ACTIVATOR P4</scope>
</reference>
<keyword id="KW-0002">3D-structure</keyword>
<keyword id="KW-0226">DNA condensation</keyword>
<keyword id="KW-0235">DNA replication</keyword>
<keyword id="KW-0238">DNA-binding</keyword>
<keyword id="KW-0244">Early protein</keyword>
<keyword id="KW-1185">Reference proteome</keyword>
<keyword id="KW-0678">Repressor</keyword>
<keyword id="KW-0804">Transcription</keyword>
<keyword id="KW-0805">Transcription regulation</keyword>
<keyword id="KW-1194">Viral DNA replication</keyword>
<gene>
    <name type="primary">6</name>
</gene>
<feature type="chain" id="PRO_0000106568" description="Histone-like protein p6">
    <location>
        <begin position="1"/>
        <end position="104"/>
    </location>
</feature>
<feature type="DNA-binding region" evidence="10">
    <location>
        <begin position="1"/>
        <end position="19"/>
    </location>
</feature>
<feature type="region of interest" description="Disordered" evidence="1">
    <location>
        <begin position="85"/>
        <end position="104"/>
    </location>
</feature>
<feature type="compositionally biased region" description="Acidic residues" evidence="1">
    <location>
        <begin position="88"/>
        <end position="104"/>
    </location>
</feature>
<feature type="mutagenesis site" description="Decreased DNA-binding affinity. No effect on dimerization." evidence="10">
    <original>K</original>
    <variation>A</variation>
    <location>
        <position position="3"/>
    </location>
</feature>
<feature type="mutagenesis site" description="Decreased DNA-binding affinity. No effect on dimerization." evidence="10">
    <original>Q</original>
    <variation>A</variation>
    <variation>K</variation>
    <location>
        <position position="6"/>
    </location>
</feature>
<feature type="mutagenesis site" description="Strong loss of DNA-binding affinity and no formation of the initiation complex. No effect on dimerization." evidence="10">
    <original>R</original>
    <variation>A</variation>
    <location>
        <position position="7"/>
    </location>
</feature>
<feature type="mutagenesis site" description="Deficient in dimer formation and viral DNA replication." evidence="3">
    <original>I</original>
    <variation>T</variation>
    <location>
        <position position="9"/>
    </location>
</feature>
<feature type="mutagenesis site" description="Decreased DNA-binding affinity. No effect on dimerization." evidence="10">
    <original>T</original>
    <variation>A</variation>
    <variation>K</variation>
    <location>
        <position position="10"/>
    </location>
</feature>
<feature type="mutagenesis site" description="Decreased DNA-binding affinity. No effect on dimerization." evidence="10">
    <original>K</original>
    <variation>A</variation>
    <location>
        <position position="11"/>
    </location>
</feature>
<feature type="mutagenesis site" description="No effect on DNA-binding affinity. No effect on dimerization." evidence="10">
    <original>N</original>
    <variation>A</variation>
    <variation>K</variation>
    <location>
        <position position="15"/>
    </location>
</feature>
<feature type="mutagenesis site" description="Decreased DNA-binding affinity. No effect on dimerization." evidence="10">
    <original>K</original>
    <variation>A</variation>
    <location>
        <position position="18"/>
    </location>
</feature>
<feature type="mutagenesis site" description="Deficient in dimer formation and viral DNA replication." evidence="3">
    <original>A</original>
    <variation>V</variation>
    <location>
        <position position="45"/>
    </location>
</feature>
<feature type="strand" evidence="14">
    <location>
        <begin position="11"/>
        <end position="22"/>
    </location>
</feature>
<feature type="strand" evidence="14">
    <location>
        <begin position="25"/>
        <end position="30"/>
    </location>
</feature>
<feature type="strand" evidence="14">
    <location>
        <begin position="34"/>
        <end position="38"/>
    </location>
</feature>
<feature type="helix" evidence="14">
    <location>
        <begin position="42"/>
        <end position="52"/>
    </location>
</feature>
<feature type="turn" evidence="14">
    <location>
        <begin position="53"/>
        <end position="55"/>
    </location>
</feature>
<feature type="strand" evidence="14">
    <location>
        <begin position="58"/>
        <end position="66"/>
    </location>
</feature>
<feature type="helix" evidence="15">
    <location>
        <begin position="74"/>
        <end position="80"/>
    </location>
</feature>
<organismHost>
    <name type="scientific">Bacillus subtilis</name>
    <dbReference type="NCBI Taxonomy" id="1423"/>
</organismHost>
<comment type="function">
    <text evidence="2 4 6 7 8">Histone-like nucleoprotein that binds to the viral dsDNA and responsible for wrapping and compacting the viral DNA about 4-fold. Forms a nucleoprotein complex in which the DNA adopts a right-handed toroidal conformation winding around a protein core. Binds ito most, if not all, the viral genome, although with different affinity, the highest one corresponding to the genome ends. The formation of the nucleoprotein complex at the genome ends, activates the initiation of viral DNA replication. The binding of p6 would recruit the complex formed by the TP and the DNA polymerase to the origin. Protein p6 also represses early transcription from promoter C2, and, together with protein p4, represses transcription from promoters A2b and A2c and activates late transcription from promoter A3. Protein p6 is therefore involved in the early to late transcription switch. The formation of the nucleoprotein complex at the right end of the phage genome where the early promoter C2 is located affects local topology, which may contribute to the promoter repression.</text>
</comment>
<comment type="subunit">
    <text evidence="3 4 5 6">Homodimer (PubMed:12383516). Homomultimer (PubMed:12383516). Binds to double-stranded DNA giving rise to multimeric nucleoprotein complexes (PubMed:12383516). Binding specificity for the viral DNA is based on supercoiling, the viral genome having a negative superhelicity lower than that of plasmid DNA (PubMed:15118076). Interacts with the DNA replication protein p17; this interaction optimizes the binding of protein p6 at the viral DNA ends, thus favoring the initiation of replication (PubMed:12480935). Interacts with the late genes activator p4 (via C-terminus) (PubMed:12426390).</text>
</comment>
<comment type="induction">
    <text evidence="9">Expressed in the early phase of the viral replicative cycle.</text>
</comment>
<comment type="domain">
    <text evidence="10">The N-terminus is involved in DNA-binding.</text>
</comment>
<comment type="similarity">
    <text evidence="13">Belongs to the phi29likevirus histone-like protein p6 family.</text>
</comment>
<protein>
    <recommendedName>
        <fullName evidence="12">Histone-like protein p6</fullName>
    </recommendedName>
    <alternativeName>
        <fullName evidence="13">Double-stranded DNA-binding protein p6</fullName>
    </alternativeName>
    <alternativeName>
        <fullName evidence="13">Gene product 6</fullName>
        <shortName evidence="13">gp6</shortName>
    </alternativeName>
    <alternativeName>
        <fullName evidence="11">Nucleoid-associated protein p6</fullName>
    </alternativeName>
    <alternativeName>
        <fullName evidence="13">Protein p6</fullName>
    </alternativeName>
</protein>
<sequence>MAKMMQREITKTTVNVAKMVMVDGEVQVEQLPSETFVGNLTMEQAQWRMKRKYKGEPVQVVSVEPNTEVYELPVEKFLEVATVRVEKDEDQEEQTEAPEEQVAE</sequence>
<name>NP_BPPH2</name>
<proteinExistence type="evidence at protein level"/>
<evidence type="ECO:0000256" key="1">
    <source>
        <dbReference type="SAM" id="MobiDB-lite"/>
    </source>
</evidence>
<evidence type="ECO:0000269" key="2">
    <source>
    </source>
</evidence>
<evidence type="ECO:0000269" key="3">
    <source>
    </source>
</evidence>
<evidence type="ECO:0000269" key="4">
    <source>
    </source>
</evidence>
<evidence type="ECO:0000269" key="5">
    <source>
    </source>
</evidence>
<evidence type="ECO:0000269" key="6">
    <source>
    </source>
</evidence>
<evidence type="ECO:0000269" key="7">
    <source>
    </source>
</evidence>
<evidence type="ECO:0000269" key="8">
    <source>
    </source>
</evidence>
<evidence type="ECO:0000269" key="9">
    <source>
    </source>
</evidence>
<evidence type="ECO:0000269" key="10">
    <source>
    </source>
</evidence>
<evidence type="ECO:0000303" key="11">
    <source>
    </source>
</evidence>
<evidence type="ECO:0000303" key="12">
    <source>
    </source>
</evidence>
<evidence type="ECO:0000305" key="13"/>
<evidence type="ECO:0007829" key="14">
    <source>
        <dbReference type="PDB" id="8PW2"/>
    </source>
</evidence>
<evidence type="ECO:0007829" key="15">
    <source>
        <dbReference type="PDB" id="8PW4"/>
    </source>
</evidence>
<organism>
    <name type="scientific">Bacillus phage phi29</name>
    <name type="common">Bacteriophage phi-29</name>
    <dbReference type="NCBI Taxonomy" id="2884424"/>
    <lineage>
        <taxon>Viruses</taxon>
        <taxon>Duplodnaviria</taxon>
        <taxon>Heunggongvirae</taxon>
        <taxon>Uroviricota</taxon>
        <taxon>Caudoviricetes</taxon>
        <taxon>Salasmaviridae</taxon>
        <taxon>Picovirinae</taxon>
        <taxon>Salasvirus</taxon>
        <taxon>Salasvirus phi29</taxon>
    </lineage>
</organism>
<accession>P03685</accession>
<accession>B3VMP1</accession>